<feature type="chain" id="PRO_1000051579" description="Glucose-1-phosphate adenylyltransferase">
    <location>
        <begin position="1"/>
        <end position="423"/>
    </location>
</feature>
<feature type="binding site" evidence="1">
    <location>
        <position position="107"/>
    </location>
    <ligand>
        <name>alpha-D-glucose 1-phosphate</name>
        <dbReference type="ChEBI" id="CHEBI:58601"/>
    </ligand>
</feature>
<feature type="binding site" evidence="1">
    <location>
        <position position="172"/>
    </location>
    <ligand>
        <name>alpha-D-glucose 1-phosphate</name>
        <dbReference type="ChEBI" id="CHEBI:58601"/>
    </ligand>
</feature>
<feature type="binding site" evidence="1">
    <location>
        <begin position="187"/>
        <end position="188"/>
    </location>
    <ligand>
        <name>alpha-D-glucose 1-phosphate</name>
        <dbReference type="ChEBI" id="CHEBI:58601"/>
    </ligand>
</feature>
<feature type="binding site" evidence="1">
    <location>
        <position position="205"/>
    </location>
    <ligand>
        <name>alpha-D-glucose 1-phosphate</name>
        <dbReference type="ChEBI" id="CHEBI:58601"/>
    </ligand>
</feature>
<accession>A3PJX6</accession>
<sequence length="423" mass="47311">MKAQPPLRLTAQAMAFVLAGGRGSRLKELTDRRAKPAVYFGGKARIIDFALSNAMNSGIRKMAIATQYKAHSLIRHIQRGWNFFREERNEYLDILPASQRVDENRWYLGTADAVTQNIDIVDSYDIKYVIILAGDHVYKMDYEIMLRQHCETGADVTIGCLTVPRAEATAFGVMHVDANLRITDFLEKPADPPGIPGDEANALASMGIYVFDWAFLRDLLIRDAEDPNSSHDFGHDLIPAIVKNGKAMAHRFSDSCVMTGLETEPYWRDVGTIDAFWQANIDLTDFTPKLDLYDREWPIWTYSQIVPPAKFIHDSENRRGTAISSLVSGDCIVSGSEIRSSLLFTGCRTHSYSSMSHVVALPHVTVNRKADLTNCVLDRGVVVPEGLVIGQDAEEDARWFRRSEGGIVLVTQDMLDARARALN</sequence>
<comment type="function">
    <text evidence="1">Involved in the biosynthesis of ADP-glucose, a building block required for the elongation reactions to produce glycogen. Catalyzes the reaction between ATP and alpha-D-glucose 1-phosphate (G1P) to produce pyrophosphate and ADP-Glc.</text>
</comment>
<comment type="catalytic activity">
    <reaction evidence="1">
        <text>alpha-D-glucose 1-phosphate + ATP + H(+) = ADP-alpha-D-glucose + diphosphate</text>
        <dbReference type="Rhea" id="RHEA:12120"/>
        <dbReference type="ChEBI" id="CHEBI:15378"/>
        <dbReference type="ChEBI" id="CHEBI:30616"/>
        <dbReference type="ChEBI" id="CHEBI:33019"/>
        <dbReference type="ChEBI" id="CHEBI:57498"/>
        <dbReference type="ChEBI" id="CHEBI:58601"/>
        <dbReference type="EC" id="2.7.7.27"/>
    </reaction>
</comment>
<comment type="pathway">
    <text evidence="1">Glycan biosynthesis; glycogen biosynthesis.</text>
</comment>
<comment type="subunit">
    <text evidence="1">Homotetramer.</text>
</comment>
<comment type="similarity">
    <text evidence="1">Belongs to the bacterial/plant glucose-1-phosphate adenylyltransferase family.</text>
</comment>
<reference key="1">
    <citation type="submission" date="2007-02" db="EMBL/GenBank/DDBJ databases">
        <title>Complete sequence of chromosome 1 of Rhodobacter sphaeroides ATCC 17029.</title>
        <authorList>
            <person name="Copeland A."/>
            <person name="Lucas S."/>
            <person name="Lapidus A."/>
            <person name="Barry K."/>
            <person name="Detter J.C."/>
            <person name="Glavina del Rio T."/>
            <person name="Hammon N."/>
            <person name="Israni S."/>
            <person name="Dalin E."/>
            <person name="Tice H."/>
            <person name="Pitluck S."/>
            <person name="Kiss H."/>
            <person name="Brettin T."/>
            <person name="Bruce D."/>
            <person name="Han C."/>
            <person name="Tapia R."/>
            <person name="Gilna P."/>
            <person name="Schmutz J."/>
            <person name="Larimer F."/>
            <person name="Land M."/>
            <person name="Hauser L."/>
            <person name="Kyrpides N."/>
            <person name="Mikhailova N."/>
            <person name="Richardson P."/>
            <person name="Mackenzie C."/>
            <person name="Choudhary M."/>
            <person name="Donohue T.J."/>
            <person name="Kaplan S."/>
        </authorList>
    </citation>
    <scope>NUCLEOTIDE SEQUENCE [LARGE SCALE GENOMIC DNA]</scope>
    <source>
        <strain>ATCC 17029 / ATH 2.4.9</strain>
    </source>
</reference>
<name>GLGC_CERS1</name>
<protein>
    <recommendedName>
        <fullName evidence="1">Glucose-1-phosphate adenylyltransferase</fullName>
        <ecNumber evidence="1">2.7.7.27</ecNumber>
    </recommendedName>
    <alternativeName>
        <fullName evidence="1">ADP-glucose pyrophosphorylase</fullName>
        <shortName evidence="1">ADPGlc PPase</shortName>
    </alternativeName>
    <alternativeName>
        <fullName evidence="1">ADP-glucose synthase</fullName>
    </alternativeName>
</protein>
<gene>
    <name evidence="1" type="primary">glgC</name>
    <name type="ordered locus">Rsph17029_1532</name>
</gene>
<dbReference type="EC" id="2.7.7.27" evidence="1"/>
<dbReference type="EMBL" id="CP000577">
    <property type="protein sequence ID" value="ABN76642.1"/>
    <property type="molecule type" value="Genomic_DNA"/>
</dbReference>
<dbReference type="RefSeq" id="WP_002720043.1">
    <property type="nucleotide sequence ID" value="NC_009049.1"/>
</dbReference>
<dbReference type="SMR" id="A3PJX6"/>
<dbReference type="GeneID" id="3720626"/>
<dbReference type="KEGG" id="rsh:Rsph17029_1532"/>
<dbReference type="HOGENOM" id="CLU_029499_14_1_5"/>
<dbReference type="UniPathway" id="UPA00164"/>
<dbReference type="GO" id="GO:0005524">
    <property type="term" value="F:ATP binding"/>
    <property type="evidence" value="ECO:0007669"/>
    <property type="project" value="UniProtKB-KW"/>
</dbReference>
<dbReference type="GO" id="GO:0008878">
    <property type="term" value="F:glucose-1-phosphate adenylyltransferase activity"/>
    <property type="evidence" value="ECO:0007669"/>
    <property type="project" value="UniProtKB-UniRule"/>
</dbReference>
<dbReference type="GO" id="GO:0005978">
    <property type="term" value="P:glycogen biosynthetic process"/>
    <property type="evidence" value="ECO:0007669"/>
    <property type="project" value="UniProtKB-UniRule"/>
</dbReference>
<dbReference type="CDD" id="cd02508">
    <property type="entry name" value="ADP_Glucose_PP"/>
    <property type="match status" value="1"/>
</dbReference>
<dbReference type="CDD" id="cd04651">
    <property type="entry name" value="LbH_G1P_AT_C"/>
    <property type="match status" value="1"/>
</dbReference>
<dbReference type="Gene3D" id="2.160.10.10">
    <property type="entry name" value="Hexapeptide repeat proteins"/>
    <property type="match status" value="1"/>
</dbReference>
<dbReference type="Gene3D" id="3.90.550.10">
    <property type="entry name" value="Spore Coat Polysaccharide Biosynthesis Protein SpsA, Chain A"/>
    <property type="match status" value="1"/>
</dbReference>
<dbReference type="HAMAP" id="MF_00624">
    <property type="entry name" value="GlgC"/>
    <property type="match status" value="1"/>
</dbReference>
<dbReference type="InterPro" id="IPR011831">
    <property type="entry name" value="ADP-Glc_PPase"/>
</dbReference>
<dbReference type="InterPro" id="IPR005836">
    <property type="entry name" value="ADP_Glu_pyroP_CS"/>
</dbReference>
<dbReference type="InterPro" id="IPR023049">
    <property type="entry name" value="GlgC_bac"/>
</dbReference>
<dbReference type="InterPro" id="IPR056818">
    <property type="entry name" value="GlmU/GlgC-like_hexapep"/>
</dbReference>
<dbReference type="InterPro" id="IPR005835">
    <property type="entry name" value="NTP_transferase_dom"/>
</dbReference>
<dbReference type="InterPro" id="IPR029044">
    <property type="entry name" value="Nucleotide-diphossugar_trans"/>
</dbReference>
<dbReference type="InterPro" id="IPR011004">
    <property type="entry name" value="Trimer_LpxA-like_sf"/>
</dbReference>
<dbReference type="NCBIfam" id="TIGR02091">
    <property type="entry name" value="glgC"/>
    <property type="match status" value="1"/>
</dbReference>
<dbReference type="NCBIfam" id="NF001947">
    <property type="entry name" value="PRK00725.1"/>
    <property type="match status" value="1"/>
</dbReference>
<dbReference type="NCBIfam" id="NF002023">
    <property type="entry name" value="PRK00844.1"/>
    <property type="match status" value="1"/>
</dbReference>
<dbReference type="PANTHER" id="PTHR43523:SF2">
    <property type="entry name" value="GLUCOSE-1-PHOSPHATE ADENYLYLTRANSFERASE"/>
    <property type="match status" value="1"/>
</dbReference>
<dbReference type="PANTHER" id="PTHR43523">
    <property type="entry name" value="GLUCOSE-1-PHOSPHATE ADENYLYLTRANSFERASE-RELATED"/>
    <property type="match status" value="1"/>
</dbReference>
<dbReference type="Pfam" id="PF24894">
    <property type="entry name" value="Hexapep_GlmU"/>
    <property type="match status" value="1"/>
</dbReference>
<dbReference type="Pfam" id="PF00483">
    <property type="entry name" value="NTP_transferase"/>
    <property type="match status" value="1"/>
</dbReference>
<dbReference type="SUPFAM" id="SSF53448">
    <property type="entry name" value="Nucleotide-diphospho-sugar transferases"/>
    <property type="match status" value="1"/>
</dbReference>
<dbReference type="SUPFAM" id="SSF51161">
    <property type="entry name" value="Trimeric LpxA-like enzymes"/>
    <property type="match status" value="1"/>
</dbReference>
<dbReference type="PROSITE" id="PS00808">
    <property type="entry name" value="ADP_GLC_PYROPHOSPH_1"/>
    <property type="match status" value="1"/>
</dbReference>
<dbReference type="PROSITE" id="PS00809">
    <property type="entry name" value="ADP_GLC_PYROPHOSPH_2"/>
    <property type="match status" value="1"/>
</dbReference>
<proteinExistence type="inferred from homology"/>
<organism>
    <name type="scientific">Cereibacter sphaeroides (strain ATCC 17029 / ATH 2.4.9)</name>
    <name type="common">Rhodobacter sphaeroides</name>
    <dbReference type="NCBI Taxonomy" id="349101"/>
    <lineage>
        <taxon>Bacteria</taxon>
        <taxon>Pseudomonadati</taxon>
        <taxon>Pseudomonadota</taxon>
        <taxon>Alphaproteobacteria</taxon>
        <taxon>Rhodobacterales</taxon>
        <taxon>Paracoccaceae</taxon>
        <taxon>Cereibacter</taxon>
    </lineage>
</organism>
<evidence type="ECO:0000255" key="1">
    <source>
        <dbReference type="HAMAP-Rule" id="MF_00624"/>
    </source>
</evidence>
<keyword id="KW-0067">ATP-binding</keyword>
<keyword id="KW-0119">Carbohydrate metabolism</keyword>
<keyword id="KW-0320">Glycogen biosynthesis</keyword>
<keyword id="KW-0321">Glycogen metabolism</keyword>
<keyword id="KW-0547">Nucleotide-binding</keyword>
<keyword id="KW-0548">Nucleotidyltransferase</keyword>
<keyword id="KW-0808">Transferase</keyword>